<proteinExistence type="inferred from homology"/>
<feature type="chain" id="PRO_0000385885" description="GTPase Obg">
    <location>
        <begin position="1"/>
        <end position="333"/>
    </location>
</feature>
<feature type="domain" description="Obg" evidence="2">
    <location>
        <begin position="1"/>
        <end position="159"/>
    </location>
</feature>
<feature type="domain" description="OBG-type G" evidence="1">
    <location>
        <begin position="160"/>
        <end position="329"/>
    </location>
</feature>
<feature type="region of interest" description="Disordered" evidence="3">
    <location>
        <begin position="63"/>
        <end position="85"/>
    </location>
</feature>
<feature type="compositionally biased region" description="Basic and acidic residues" evidence="3">
    <location>
        <begin position="75"/>
        <end position="84"/>
    </location>
</feature>
<feature type="binding site" evidence="1">
    <location>
        <begin position="166"/>
        <end position="173"/>
    </location>
    <ligand>
        <name>GTP</name>
        <dbReference type="ChEBI" id="CHEBI:37565"/>
    </ligand>
</feature>
<feature type="binding site" evidence="1">
    <location>
        <position position="173"/>
    </location>
    <ligand>
        <name>Mg(2+)</name>
        <dbReference type="ChEBI" id="CHEBI:18420"/>
    </ligand>
</feature>
<feature type="binding site" evidence="1">
    <location>
        <begin position="191"/>
        <end position="195"/>
    </location>
    <ligand>
        <name>GTP</name>
        <dbReference type="ChEBI" id="CHEBI:37565"/>
    </ligand>
</feature>
<feature type="binding site" evidence="1">
    <location>
        <position position="193"/>
    </location>
    <ligand>
        <name>Mg(2+)</name>
        <dbReference type="ChEBI" id="CHEBI:18420"/>
    </ligand>
</feature>
<feature type="binding site" evidence="1">
    <location>
        <begin position="213"/>
        <end position="216"/>
    </location>
    <ligand>
        <name>GTP</name>
        <dbReference type="ChEBI" id="CHEBI:37565"/>
    </ligand>
</feature>
<feature type="binding site" evidence="1">
    <location>
        <begin position="283"/>
        <end position="286"/>
    </location>
    <ligand>
        <name>GTP</name>
        <dbReference type="ChEBI" id="CHEBI:37565"/>
    </ligand>
</feature>
<feature type="binding site" evidence="1">
    <location>
        <begin position="310"/>
        <end position="312"/>
    </location>
    <ligand>
        <name>GTP</name>
        <dbReference type="ChEBI" id="CHEBI:37565"/>
    </ligand>
</feature>
<reference key="1">
    <citation type="submission" date="2007-10" db="EMBL/GenBank/DDBJ databases">
        <title>Complete sequence of Desulfococcus oleovorans Hxd3.</title>
        <authorList>
            <consortium name="US DOE Joint Genome Institute"/>
            <person name="Copeland A."/>
            <person name="Lucas S."/>
            <person name="Lapidus A."/>
            <person name="Barry K."/>
            <person name="Glavina del Rio T."/>
            <person name="Dalin E."/>
            <person name="Tice H."/>
            <person name="Pitluck S."/>
            <person name="Kiss H."/>
            <person name="Brettin T."/>
            <person name="Bruce D."/>
            <person name="Detter J.C."/>
            <person name="Han C."/>
            <person name="Schmutz J."/>
            <person name="Larimer F."/>
            <person name="Land M."/>
            <person name="Hauser L."/>
            <person name="Kyrpides N."/>
            <person name="Kim E."/>
            <person name="Wawrik B."/>
            <person name="Richardson P."/>
        </authorList>
    </citation>
    <scope>NUCLEOTIDE SEQUENCE [LARGE SCALE GENOMIC DNA]</scope>
    <source>
        <strain>DSM 6200 / JCM 39069 / Hxd3</strain>
    </source>
</reference>
<keyword id="KW-0963">Cytoplasm</keyword>
<keyword id="KW-0342">GTP-binding</keyword>
<keyword id="KW-0378">Hydrolase</keyword>
<keyword id="KW-0460">Magnesium</keyword>
<keyword id="KW-0479">Metal-binding</keyword>
<keyword id="KW-0547">Nucleotide-binding</keyword>
<keyword id="KW-1185">Reference proteome</keyword>
<sequence length="333" mass="35064">MKFIDEATITVSSGKGGRGCVSFRRERFVPRGGPDGGDGGSGGSLLFRVNPSKRTLYAFRSKKQFAAPNGAPGEGRQKTGKSGDDLVIEVPPGTLIFDADTGAIIRDMVSPEEDFVFLTGGRGGKGNKHFATSTHQTPRFAQPGEPAQTATVRLELKLLADVGLIGLPNAGKSTLLSVISAARPAIGAYPFTTLSPNLGMVTLAGAEPFAVADIPGLIEGAHTGAGLGIRFLKHIERTRLLVHLIDASAIDPADPVAPFRIINAELAMFSPALAERPQVVVLNKMDLTGAEALAQQFINAAGIKKCFLISAATRSGVEELKKHLFELLCSHDT</sequence>
<comment type="function">
    <text evidence="1">An essential GTPase which binds GTP, GDP and possibly (p)ppGpp with moderate affinity, with high nucleotide exchange rates and a fairly low GTP hydrolysis rate. Plays a role in control of the cell cycle, stress response, ribosome biogenesis and in those bacteria that undergo differentiation, in morphogenesis control.</text>
</comment>
<comment type="cofactor">
    <cofactor evidence="1">
        <name>Mg(2+)</name>
        <dbReference type="ChEBI" id="CHEBI:18420"/>
    </cofactor>
</comment>
<comment type="subunit">
    <text evidence="1">Monomer.</text>
</comment>
<comment type="subcellular location">
    <subcellularLocation>
        <location evidence="1">Cytoplasm</location>
    </subcellularLocation>
</comment>
<comment type="similarity">
    <text evidence="1">Belongs to the TRAFAC class OBG-HflX-like GTPase superfamily. OBG GTPase family.</text>
</comment>
<dbReference type="EC" id="3.6.5.-" evidence="1"/>
<dbReference type="EMBL" id="CP000859">
    <property type="protein sequence ID" value="ABW65898.1"/>
    <property type="molecule type" value="Genomic_DNA"/>
</dbReference>
<dbReference type="RefSeq" id="WP_012173517.1">
    <property type="nucleotide sequence ID" value="NC_009943.1"/>
</dbReference>
<dbReference type="SMR" id="A8ZRY1"/>
<dbReference type="STRING" id="96561.Dole_0088"/>
<dbReference type="KEGG" id="dol:Dole_0088"/>
<dbReference type="eggNOG" id="COG0536">
    <property type="taxonomic scope" value="Bacteria"/>
</dbReference>
<dbReference type="HOGENOM" id="CLU_011747_2_3_7"/>
<dbReference type="OrthoDB" id="9807318at2"/>
<dbReference type="Proteomes" id="UP000008561">
    <property type="component" value="Chromosome"/>
</dbReference>
<dbReference type="GO" id="GO:0005737">
    <property type="term" value="C:cytoplasm"/>
    <property type="evidence" value="ECO:0007669"/>
    <property type="project" value="UniProtKB-SubCell"/>
</dbReference>
<dbReference type="GO" id="GO:0005525">
    <property type="term" value="F:GTP binding"/>
    <property type="evidence" value="ECO:0007669"/>
    <property type="project" value="UniProtKB-UniRule"/>
</dbReference>
<dbReference type="GO" id="GO:0003924">
    <property type="term" value="F:GTPase activity"/>
    <property type="evidence" value="ECO:0007669"/>
    <property type="project" value="UniProtKB-UniRule"/>
</dbReference>
<dbReference type="GO" id="GO:0000287">
    <property type="term" value="F:magnesium ion binding"/>
    <property type="evidence" value="ECO:0007669"/>
    <property type="project" value="InterPro"/>
</dbReference>
<dbReference type="GO" id="GO:0042254">
    <property type="term" value="P:ribosome biogenesis"/>
    <property type="evidence" value="ECO:0007669"/>
    <property type="project" value="UniProtKB-UniRule"/>
</dbReference>
<dbReference type="CDD" id="cd01898">
    <property type="entry name" value="Obg"/>
    <property type="match status" value="1"/>
</dbReference>
<dbReference type="FunFam" id="2.70.210.12:FF:000001">
    <property type="entry name" value="GTPase Obg"/>
    <property type="match status" value="1"/>
</dbReference>
<dbReference type="Gene3D" id="2.70.210.12">
    <property type="entry name" value="GTP1/OBG domain"/>
    <property type="match status" value="1"/>
</dbReference>
<dbReference type="Gene3D" id="3.40.50.300">
    <property type="entry name" value="P-loop containing nucleotide triphosphate hydrolases"/>
    <property type="match status" value="1"/>
</dbReference>
<dbReference type="HAMAP" id="MF_01454">
    <property type="entry name" value="GTPase_Obg"/>
    <property type="match status" value="1"/>
</dbReference>
<dbReference type="InterPro" id="IPR031167">
    <property type="entry name" value="G_OBG"/>
</dbReference>
<dbReference type="InterPro" id="IPR006073">
    <property type="entry name" value="GTP-bd"/>
</dbReference>
<dbReference type="InterPro" id="IPR014100">
    <property type="entry name" value="GTP-bd_Obg/CgtA"/>
</dbReference>
<dbReference type="InterPro" id="IPR006074">
    <property type="entry name" value="GTP1-OBG_CS"/>
</dbReference>
<dbReference type="InterPro" id="IPR006169">
    <property type="entry name" value="GTP1_OBG_dom"/>
</dbReference>
<dbReference type="InterPro" id="IPR036726">
    <property type="entry name" value="GTP1_OBG_dom_sf"/>
</dbReference>
<dbReference type="InterPro" id="IPR045086">
    <property type="entry name" value="OBG_GTPase"/>
</dbReference>
<dbReference type="InterPro" id="IPR027417">
    <property type="entry name" value="P-loop_NTPase"/>
</dbReference>
<dbReference type="NCBIfam" id="TIGR02729">
    <property type="entry name" value="Obg_CgtA"/>
    <property type="match status" value="1"/>
</dbReference>
<dbReference type="NCBIfam" id="NF008955">
    <property type="entry name" value="PRK12297.1"/>
    <property type="match status" value="1"/>
</dbReference>
<dbReference type="NCBIfam" id="NF008956">
    <property type="entry name" value="PRK12299.1"/>
    <property type="match status" value="1"/>
</dbReference>
<dbReference type="PANTHER" id="PTHR11702">
    <property type="entry name" value="DEVELOPMENTALLY REGULATED GTP-BINDING PROTEIN-RELATED"/>
    <property type="match status" value="1"/>
</dbReference>
<dbReference type="PANTHER" id="PTHR11702:SF31">
    <property type="entry name" value="MITOCHONDRIAL RIBOSOME-ASSOCIATED GTPASE 2"/>
    <property type="match status" value="1"/>
</dbReference>
<dbReference type="Pfam" id="PF01018">
    <property type="entry name" value="GTP1_OBG"/>
    <property type="match status" value="1"/>
</dbReference>
<dbReference type="Pfam" id="PF01926">
    <property type="entry name" value="MMR_HSR1"/>
    <property type="match status" value="1"/>
</dbReference>
<dbReference type="PIRSF" id="PIRSF002401">
    <property type="entry name" value="GTP_bd_Obg/CgtA"/>
    <property type="match status" value="1"/>
</dbReference>
<dbReference type="PRINTS" id="PR00326">
    <property type="entry name" value="GTP1OBG"/>
</dbReference>
<dbReference type="SUPFAM" id="SSF82051">
    <property type="entry name" value="Obg GTP-binding protein N-terminal domain"/>
    <property type="match status" value="1"/>
</dbReference>
<dbReference type="SUPFAM" id="SSF52540">
    <property type="entry name" value="P-loop containing nucleoside triphosphate hydrolases"/>
    <property type="match status" value="1"/>
</dbReference>
<dbReference type="PROSITE" id="PS51710">
    <property type="entry name" value="G_OBG"/>
    <property type="match status" value="1"/>
</dbReference>
<dbReference type="PROSITE" id="PS00905">
    <property type="entry name" value="GTP1_OBG"/>
    <property type="match status" value="1"/>
</dbReference>
<dbReference type="PROSITE" id="PS51883">
    <property type="entry name" value="OBG"/>
    <property type="match status" value="1"/>
</dbReference>
<organism>
    <name type="scientific">Desulfosudis oleivorans (strain DSM 6200 / JCM 39069 / Hxd3)</name>
    <name type="common">Desulfococcus oleovorans</name>
    <dbReference type="NCBI Taxonomy" id="96561"/>
    <lineage>
        <taxon>Bacteria</taxon>
        <taxon>Pseudomonadati</taxon>
        <taxon>Thermodesulfobacteriota</taxon>
        <taxon>Desulfobacteria</taxon>
        <taxon>Desulfobacterales</taxon>
        <taxon>Desulfosudaceae</taxon>
        <taxon>Desulfosudis</taxon>
    </lineage>
</organism>
<evidence type="ECO:0000255" key="1">
    <source>
        <dbReference type="HAMAP-Rule" id="MF_01454"/>
    </source>
</evidence>
<evidence type="ECO:0000255" key="2">
    <source>
        <dbReference type="PROSITE-ProRule" id="PRU01231"/>
    </source>
</evidence>
<evidence type="ECO:0000256" key="3">
    <source>
        <dbReference type="SAM" id="MobiDB-lite"/>
    </source>
</evidence>
<protein>
    <recommendedName>
        <fullName evidence="1">GTPase Obg</fullName>
        <ecNumber evidence="1">3.6.5.-</ecNumber>
    </recommendedName>
    <alternativeName>
        <fullName evidence="1">GTP-binding protein Obg</fullName>
    </alternativeName>
</protein>
<name>OBG_DESOH</name>
<accession>A8ZRY1</accession>
<gene>
    <name evidence="1" type="primary">obg</name>
    <name type="ordered locus">Dole_0088</name>
</gene>